<accession>A5CQU4</accession>
<feature type="chain" id="PRO_1000009517" description="tRNA-specific 2-thiouridylase MnmA">
    <location>
        <begin position="1"/>
        <end position="387"/>
    </location>
</feature>
<feature type="region of interest" description="Interaction with tRNA" evidence="1">
    <location>
        <begin position="148"/>
        <end position="150"/>
    </location>
</feature>
<feature type="active site" description="Nucleophile" evidence="1">
    <location>
        <position position="101"/>
    </location>
</feature>
<feature type="active site" description="Cysteine persulfide intermediate" evidence="1">
    <location>
        <position position="199"/>
    </location>
</feature>
<feature type="binding site" evidence="1">
    <location>
        <begin position="6"/>
        <end position="13"/>
    </location>
    <ligand>
        <name>ATP</name>
        <dbReference type="ChEBI" id="CHEBI:30616"/>
    </ligand>
</feature>
<feature type="binding site" evidence="1">
    <location>
        <position position="32"/>
    </location>
    <ligand>
        <name>ATP</name>
        <dbReference type="ChEBI" id="CHEBI:30616"/>
    </ligand>
</feature>
<feature type="binding site" evidence="1">
    <location>
        <position position="125"/>
    </location>
    <ligand>
        <name>ATP</name>
        <dbReference type="ChEBI" id="CHEBI:30616"/>
    </ligand>
</feature>
<feature type="site" description="Interaction with tRNA" evidence="1">
    <location>
        <position position="126"/>
    </location>
</feature>
<feature type="site" description="Interaction with tRNA" evidence="1">
    <location>
        <position position="345"/>
    </location>
</feature>
<feature type="disulfide bond" description="Alternate" evidence="1">
    <location>
        <begin position="101"/>
        <end position="199"/>
    </location>
</feature>
<name>MNMA_CLAM3</name>
<sequence length="387" mass="40746">MKILAAMSGGVDSAVAAARAVEAGHDVTGVHLALSRMPGTLRTGSRGCCTIEDSMDARRAADLLGIPFYVWDFSERFAADVVDDFVAEYQAGRTPNPCMRCNERIKFAAVLEKALDLGFDAVCTGHYADVLEGPDGQPELHRAAAWAKDQSYVLGVLTAEQIAHSYFPLGSTPSKAEVRAEAQARGIQVAQKPDSHDICFIPDGDTRGWLADRVGAEPGEILDGEGNAIGTHQGAAAFTVGQRKGLAIGTPAPDGRPRFVLEIRPKDNTVVVGPQEALAIREIAGSSYTWAGTPPTRPDQPFDCDVQIRAHADPVPARAAVSVVDGSVQLVITPRDPLHGVAPGQTAVVYAGTRVLGQVTIDRTVSAVDDARPPMRDAALVGAAAGE</sequence>
<reference key="1">
    <citation type="journal article" date="2008" name="J. Bacteriol.">
        <title>The genome sequence of the tomato-pathogenic actinomycete Clavibacter michiganensis subsp. michiganensis NCPPB382 reveals a large island involved in pathogenicity.</title>
        <authorList>
            <person name="Gartemann K.-H."/>
            <person name="Abt B."/>
            <person name="Bekel T."/>
            <person name="Burger A."/>
            <person name="Engemann J."/>
            <person name="Fluegel M."/>
            <person name="Gaigalat L."/>
            <person name="Goesmann A."/>
            <person name="Graefen I."/>
            <person name="Kalinowski J."/>
            <person name="Kaup O."/>
            <person name="Kirchner O."/>
            <person name="Krause L."/>
            <person name="Linke B."/>
            <person name="McHardy A."/>
            <person name="Meyer F."/>
            <person name="Pohle S."/>
            <person name="Rueckert C."/>
            <person name="Schneiker S."/>
            <person name="Zellermann E.-M."/>
            <person name="Puehler A."/>
            <person name="Eichenlaub R."/>
            <person name="Kaiser O."/>
            <person name="Bartels D."/>
        </authorList>
    </citation>
    <scope>NUCLEOTIDE SEQUENCE [LARGE SCALE GENOMIC DNA]</scope>
    <source>
        <strain>NCPPB 382</strain>
    </source>
</reference>
<protein>
    <recommendedName>
        <fullName evidence="1">tRNA-specific 2-thiouridylase MnmA</fullName>
        <ecNumber evidence="1">2.8.1.13</ecNumber>
    </recommendedName>
</protein>
<evidence type="ECO:0000255" key="1">
    <source>
        <dbReference type="HAMAP-Rule" id="MF_00144"/>
    </source>
</evidence>
<gene>
    <name evidence="1" type="primary">mnmA</name>
    <name type="synonym">trmU</name>
    <name type="ordered locus">CMM_1403</name>
</gene>
<keyword id="KW-0067">ATP-binding</keyword>
<keyword id="KW-0963">Cytoplasm</keyword>
<keyword id="KW-1015">Disulfide bond</keyword>
<keyword id="KW-0547">Nucleotide-binding</keyword>
<keyword id="KW-0694">RNA-binding</keyword>
<keyword id="KW-0808">Transferase</keyword>
<keyword id="KW-0819">tRNA processing</keyword>
<keyword id="KW-0820">tRNA-binding</keyword>
<proteinExistence type="inferred from homology"/>
<comment type="function">
    <text evidence="1">Catalyzes the 2-thiolation of uridine at the wobble position (U34) of tRNA, leading to the formation of s(2)U34.</text>
</comment>
<comment type="catalytic activity">
    <reaction evidence="1">
        <text>S-sulfanyl-L-cysteinyl-[protein] + uridine(34) in tRNA + AH2 + ATP = 2-thiouridine(34) in tRNA + L-cysteinyl-[protein] + A + AMP + diphosphate + H(+)</text>
        <dbReference type="Rhea" id="RHEA:47032"/>
        <dbReference type="Rhea" id="RHEA-COMP:10131"/>
        <dbReference type="Rhea" id="RHEA-COMP:11726"/>
        <dbReference type="Rhea" id="RHEA-COMP:11727"/>
        <dbReference type="Rhea" id="RHEA-COMP:11728"/>
        <dbReference type="ChEBI" id="CHEBI:13193"/>
        <dbReference type="ChEBI" id="CHEBI:15378"/>
        <dbReference type="ChEBI" id="CHEBI:17499"/>
        <dbReference type="ChEBI" id="CHEBI:29950"/>
        <dbReference type="ChEBI" id="CHEBI:30616"/>
        <dbReference type="ChEBI" id="CHEBI:33019"/>
        <dbReference type="ChEBI" id="CHEBI:61963"/>
        <dbReference type="ChEBI" id="CHEBI:65315"/>
        <dbReference type="ChEBI" id="CHEBI:87170"/>
        <dbReference type="ChEBI" id="CHEBI:456215"/>
        <dbReference type="EC" id="2.8.1.13"/>
    </reaction>
</comment>
<comment type="subcellular location">
    <subcellularLocation>
        <location evidence="1">Cytoplasm</location>
    </subcellularLocation>
</comment>
<comment type="similarity">
    <text evidence="1">Belongs to the MnmA/TRMU family.</text>
</comment>
<organism>
    <name type="scientific">Clavibacter michiganensis subsp. michiganensis (strain NCPPB 382)</name>
    <dbReference type="NCBI Taxonomy" id="443906"/>
    <lineage>
        <taxon>Bacteria</taxon>
        <taxon>Bacillati</taxon>
        <taxon>Actinomycetota</taxon>
        <taxon>Actinomycetes</taxon>
        <taxon>Micrococcales</taxon>
        <taxon>Microbacteriaceae</taxon>
        <taxon>Clavibacter</taxon>
    </lineage>
</organism>
<dbReference type="EC" id="2.8.1.13" evidence="1"/>
<dbReference type="EMBL" id="AM711867">
    <property type="protein sequence ID" value="CAN01448.1"/>
    <property type="molecule type" value="Genomic_DNA"/>
</dbReference>
<dbReference type="RefSeq" id="WP_012038089.1">
    <property type="nucleotide sequence ID" value="NC_009480.1"/>
</dbReference>
<dbReference type="SMR" id="A5CQU4"/>
<dbReference type="KEGG" id="cmi:CMM_1403"/>
<dbReference type="eggNOG" id="COG0482">
    <property type="taxonomic scope" value="Bacteria"/>
</dbReference>
<dbReference type="HOGENOM" id="CLU_035188_0_2_11"/>
<dbReference type="Proteomes" id="UP000001564">
    <property type="component" value="Chromosome"/>
</dbReference>
<dbReference type="GO" id="GO:0005737">
    <property type="term" value="C:cytoplasm"/>
    <property type="evidence" value="ECO:0007669"/>
    <property type="project" value="UniProtKB-SubCell"/>
</dbReference>
<dbReference type="GO" id="GO:0005524">
    <property type="term" value="F:ATP binding"/>
    <property type="evidence" value="ECO:0007669"/>
    <property type="project" value="UniProtKB-KW"/>
</dbReference>
<dbReference type="GO" id="GO:0000049">
    <property type="term" value="F:tRNA binding"/>
    <property type="evidence" value="ECO:0007669"/>
    <property type="project" value="UniProtKB-KW"/>
</dbReference>
<dbReference type="GO" id="GO:0103016">
    <property type="term" value="F:tRNA-uridine 2-sulfurtransferase activity"/>
    <property type="evidence" value="ECO:0007669"/>
    <property type="project" value="UniProtKB-EC"/>
</dbReference>
<dbReference type="GO" id="GO:0002143">
    <property type="term" value="P:tRNA wobble position uridine thiolation"/>
    <property type="evidence" value="ECO:0007669"/>
    <property type="project" value="TreeGrafter"/>
</dbReference>
<dbReference type="CDD" id="cd01998">
    <property type="entry name" value="MnmA_TRMU-like"/>
    <property type="match status" value="1"/>
</dbReference>
<dbReference type="FunFam" id="2.30.30.280:FF:000001">
    <property type="entry name" value="tRNA-specific 2-thiouridylase MnmA"/>
    <property type="match status" value="1"/>
</dbReference>
<dbReference type="FunFam" id="3.40.50.620:FF:000057">
    <property type="entry name" value="tRNA-specific 2-thiouridylase MnmA"/>
    <property type="match status" value="1"/>
</dbReference>
<dbReference type="Gene3D" id="2.30.30.280">
    <property type="entry name" value="Adenine nucleotide alpha hydrolases-like domains"/>
    <property type="match status" value="1"/>
</dbReference>
<dbReference type="Gene3D" id="3.40.50.620">
    <property type="entry name" value="HUPs"/>
    <property type="match status" value="1"/>
</dbReference>
<dbReference type="Gene3D" id="2.40.30.10">
    <property type="entry name" value="Translation factors"/>
    <property type="match status" value="1"/>
</dbReference>
<dbReference type="HAMAP" id="MF_00144">
    <property type="entry name" value="tRNA_thiouridyl_MnmA"/>
    <property type="match status" value="1"/>
</dbReference>
<dbReference type="InterPro" id="IPR004506">
    <property type="entry name" value="MnmA-like"/>
</dbReference>
<dbReference type="InterPro" id="IPR046885">
    <property type="entry name" value="MnmA-like_C"/>
</dbReference>
<dbReference type="InterPro" id="IPR046884">
    <property type="entry name" value="MnmA-like_central"/>
</dbReference>
<dbReference type="InterPro" id="IPR023382">
    <property type="entry name" value="MnmA-like_central_sf"/>
</dbReference>
<dbReference type="InterPro" id="IPR014729">
    <property type="entry name" value="Rossmann-like_a/b/a_fold"/>
</dbReference>
<dbReference type="NCBIfam" id="NF001138">
    <property type="entry name" value="PRK00143.1"/>
    <property type="match status" value="1"/>
</dbReference>
<dbReference type="NCBIfam" id="TIGR00420">
    <property type="entry name" value="trmU"/>
    <property type="match status" value="1"/>
</dbReference>
<dbReference type="PANTHER" id="PTHR11933:SF5">
    <property type="entry name" value="MITOCHONDRIAL TRNA-SPECIFIC 2-THIOURIDYLASE 1"/>
    <property type="match status" value="1"/>
</dbReference>
<dbReference type="PANTHER" id="PTHR11933">
    <property type="entry name" value="TRNA 5-METHYLAMINOMETHYL-2-THIOURIDYLATE -METHYLTRANSFERASE"/>
    <property type="match status" value="1"/>
</dbReference>
<dbReference type="Pfam" id="PF03054">
    <property type="entry name" value="tRNA_Me_trans"/>
    <property type="match status" value="1"/>
</dbReference>
<dbReference type="Pfam" id="PF20258">
    <property type="entry name" value="tRNA_Me_trans_C"/>
    <property type="match status" value="1"/>
</dbReference>
<dbReference type="Pfam" id="PF20259">
    <property type="entry name" value="tRNA_Me_trans_M"/>
    <property type="match status" value="1"/>
</dbReference>
<dbReference type="SUPFAM" id="SSF52402">
    <property type="entry name" value="Adenine nucleotide alpha hydrolases-like"/>
    <property type="match status" value="1"/>
</dbReference>